<keyword id="KW-1185">Reference proteome</keyword>
<keyword id="KW-0687">Ribonucleoprotein</keyword>
<keyword id="KW-0689">Ribosomal protein</keyword>
<keyword id="KW-0694">RNA-binding</keyword>
<keyword id="KW-0699">rRNA-binding</keyword>
<dbReference type="EMBL" id="AE017308">
    <property type="protein sequence ID" value="AAT27723.1"/>
    <property type="molecule type" value="Genomic_DNA"/>
</dbReference>
<dbReference type="RefSeq" id="WP_011264757.1">
    <property type="nucleotide sequence ID" value="NC_006908.1"/>
</dbReference>
<dbReference type="SMR" id="Q6KI53"/>
<dbReference type="STRING" id="267748.MMOB2370"/>
<dbReference type="KEGG" id="mmo:MMOB2370"/>
<dbReference type="eggNOG" id="COG0089">
    <property type="taxonomic scope" value="Bacteria"/>
</dbReference>
<dbReference type="HOGENOM" id="CLU_037562_1_0_14"/>
<dbReference type="OrthoDB" id="9793353at2"/>
<dbReference type="Proteomes" id="UP000009072">
    <property type="component" value="Chromosome"/>
</dbReference>
<dbReference type="GO" id="GO:1990904">
    <property type="term" value="C:ribonucleoprotein complex"/>
    <property type="evidence" value="ECO:0007669"/>
    <property type="project" value="UniProtKB-KW"/>
</dbReference>
<dbReference type="GO" id="GO:0005840">
    <property type="term" value="C:ribosome"/>
    <property type="evidence" value="ECO:0007669"/>
    <property type="project" value="UniProtKB-KW"/>
</dbReference>
<dbReference type="GO" id="GO:0019843">
    <property type="term" value="F:rRNA binding"/>
    <property type="evidence" value="ECO:0007669"/>
    <property type="project" value="UniProtKB-UniRule"/>
</dbReference>
<dbReference type="GO" id="GO:0003735">
    <property type="term" value="F:structural constituent of ribosome"/>
    <property type="evidence" value="ECO:0007669"/>
    <property type="project" value="InterPro"/>
</dbReference>
<dbReference type="GO" id="GO:0006412">
    <property type="term" value="P:translation"/>
    <property type="evidence" value="ECO:0007669"/>
    <property type="project" value="UniProtKB-UniRule"/>
</dbReference>
<dbReference type="Gene3D" id="3.30.70.330">
    <property type="match status" value="1"/>
</dbReference>
<dbReference type="HAMAP" id="MF_01369_B">
    <property type="entry name" value="Ribosomal_uL23_B"/>
    <property type="match status" value="1"/>
</dbReference>
<dbReference type="InterPro" id="IPR012677">
    <property type="entry name" value="Nucleotide-bd_a/b_plait_sf"/>
</dbReference>
<dbReference type="InterPro" id="IPR013025">
    <property type="entry name" value="Ribosomal_uL23-like"/>
</dbReference>
<dbReference type="InterPro" id="IPR012678">
    <property type="entry name" value="Ribosomal_uL23/eL15/eS24_sf"/>
</dbReference>
<dbReference type="NCBIfam" id="NF004363">
    <property type="entry name" value="PRK05738.2-4"/>
    <property type="match status" value="1"/>
</dbReference>
<dbReference type="NCBIfam" id="NF008919">
    <property type="entry name" value="PRK12280.1-3"/>
    <property type="match status" value="1"/>
</dbReference>
<dbReference type="PANTHER" id="PTHR11620">
    <property type="entry name" value="60S RIBOSOMAL PROTEIN L23A"/>
    <property type="match status" value="1"/>
</dbReference>
<dbReference type="Pfam" id="PF00276">
    <property type="entry name" value="Ribosomal_L23"/>
    <property type="match status" value="1"/>
</dbReference>
<dbReference type="SUPFAM" id="SSF54189">
    <property type="entry name" value="Ribosomal proteins S24e, L23 and L15e"/>
    <property type="match status" value="1"/>
</dbReference>
<feature type="chain" id="PRO_0000272778" description="Large ribosomal subunit protein uL23">
    <location>
        <begin position="1"/>
        <end position="213"/>
    </location>
</feature>
<feature type="region of interest" description="Large ribosomal subunit protein uL23" evidence="1">
    <location>
        <begin position="1"/>
        <end position="117"/>
    </location>
</feature>
<feature type="region of interest" description="Unknown">
    <location>
        <begin position="118"/>
        <end position="213"/>
    </location>
</feature>
<reference key="1">
    <citation type="journal article" date="2004" name="Genome Res.">
        <title>The complete genome and proteome of Mycoplasma mobile.</title>
        <authorList>
            <person name="Jaffe J.D."/>
            <person name="Stange-Thomann N."/>
            <person name="Smith C."/>
            <person name="DeCaprio D."/>
            <person name="Fisher S."/>
            <person name="Butler J."/>
            <person name="Calvo S."/>
            <person name="Elkins T."/>
            <person name="FitzGerald M.G."/>
            <person name="Hafez N."/>
            <person name="Kodira C.D."/>
            <person name="Major J."/>
            <person name="Wang S."/>
            <person name="Wilkinson J."/>
            <person name="Nicol R."/>
            <person name="Nusbaum C."/>
            <person name="Birren B."/>
            <person name="Berg H.C."/>
            <person name="Church G.M."/>
        </authorList>
    </citation>
    <scope>NUCLEOTIDE SEQUENCE [LARGE SCALE GENOMIC DNA]</scope>
    <source>
        <strain>ATCC 43663 / NCTC 11711 / 163 K</strain>
    </source>
</reference>
<gene>
    <name evidence="1" type="primary">rplW</name>
    <name type="ordered locus">MMOB2370</name>
</gene>
<name>RL23_MYCM1</name>
<evidence type="ECO:0000255" key="1">
    <source>
        <dbReference type="HAMAP-Rule" id="MF_01369"/>
    </source>
</evidence>
<accession>Q6KI53</accession>
<sequence>MNHNEIIKYPLLTEKSYKTMAQNVYVFAVDRRARKIEIKDAIEFIFEVKVEKINLFNVPQKEKKVGRFKGLTNSYKKAYVYLREGKINIFPEEIEKEQKVEKQLIKEKSTSELKLEEKIAAKIAAKEQSEIKDEIVKSVPKKVTSIKKEITSKEVTPIKKTTSVKKETSPKEITSVKKTTTKEKDKTLVVAKKATIDTKVKSTTTKKTTTKKV</sequence>
<comment type="function">
    <text evidence="1">One of the early assembly proteins it binds 23S rRNA. One of the proteins that surrounds the polypeptide exit tunnel on the outside of the ribosome. Forms the main docking site for trigger factor binding to the ribosome.</text>
</comment>
<comment type="subunit">
    <text evidence="1">Part of the 50S ribosomal subunit. Contacts protein L29, and trigger factor when it is bound to the ribosome.</text>
</comment>
<comment type="similarity">
    <text evidence="1">Belongs to the universal ribosomal protein uL23 family.</text>
</comment>
<proteinExistence type="inferred from homology"/>
<organism>
    <name type="scientific">Mycoplasma mobile (strain ATCC 43663 / 163K / NCTC 11711)</name>
    <name type="common">Mesomycoplasma mobile</name>
    <dbReference type="NCBI Taxonomy" id="267748"/>
    <lineage>
        <taxon>Bacteria</taxon>
        <taxon>Bacillati</taxon>
        <taxon>Mycoplasmatota</taxon>
        <taxon>Mycoplasmoidales</taxon>
        <taxon>Metamycoplasmataceae</taxon>
        <taxon>Mesomycoplasma</taxon>
    </lineage>
</organism>
<protein>
    <recommendedName>
        <fullName evidence="1">Large ribosomal subunit protein uL23</fullName>
    </recommendedName>
    <alternativeName>
        <fullName>50S ribosomal protein L23</fullName>
    </alternativeName>
</protein>